<comment type="function">
    <text evidence="1">Reversibly catalyzes the transfer of the carbamoyl group from carbamoyl phosphate (CP) to the N(epsilon) atom of ornithine (ORN) to produce L-citrulline.</text>
</comment>
<comment type="catalytic activity">
    <reaction evidence="2">
        <text>carbamoyl phosphate + L-ornithine = L-citrulline + phosphate + H(+)</text>
        <dbReference type="Rhea" id="RHEA:19513"/>
        <dbReference type="ChEBI" id="CHEBI:15378"/>
        <dbReference type="ChEBI" id="CHEBI:43474"/>
        <dbReference type="ChEBI" id="CHEBI:46911"/>
        <dbReference type="ChEBI" id="CHEBI:57743"/>
        <dbReference type="ChEBI" id="CHEBI:58228"/>
        <dbReference type="EC" id="2.1.3.3"/>
    </reaction>
</comment>
<comment type="pathway">
    <text evidence="2">Amino-acid biosynthesis; L-arginine biosynthesis; L-arginine from L-ornithine and carbamoyl phosphate: step 1/3.</text>
</comment>
<comment type="subcellular location">
    <subcellularLocation>
        <location evidence="2">Cytoplasm</location>
    </subcellularLocation>
</comment>
<comment type="similarity">
    <text evidence="2">Belongs to the aspartate/ornithine carbamoyltransferase superfamily. OTCase family.</text>
</comment>
<sequence length="311" mass="33383">MTRHFLVDTDLNPQEQTEVLDLALQLKRNPYLRQPFAGVGAGRKTVAVIFDKTSTRTRVSFAAGISELGGTPLIIGAGESQLGHKESIADTAKVLERMVATIVWRTFAQVGLEEMAANSKVPVINALSDDYHPCQLLADLLTIKEHKGGLKGLTMTYLGDGANNMANSYLLAGVTAGMHVRIAAPAEYQPDESVVRDALNRADETGGSVLVTTDPRLAASGADVLATDTWVSMGQEDEKASRAEIFKPYALDAAALALAAADAVVLHCLPAYRGYEIAAEVIDGPQSVVWDEAENRLHAQKALMAWLVERS</sequence>
<gene>
    <name evidence="2" type="primary">argF</name>
    <name type="ordered locus">RSal33209_0781</name>
</gene>
<dbReference type="EC" id="2.1.3.3" evidence="2"/>
<dbReference type="EMBL" id="CP000910">
    <property type="protein sequence ID" value="ABY22528.1"/>
    <property type="molecule type" value="Genomic_DNA"/>
</dbReference>
<dbReference type="RefSeq" id="WP_012244225.1">
    <property type="nucleotide sequence ID" value="NC_010168.1"/>
</dbReference>
<dbReference type="SMR" id="A9WQ88"/>
<dbReference type="STRING" id="288705.RSal33209_0781"/>
<dbReference type="KEGG" id="rsa:RSal33209_0781"/>
<dbReference type="eggNOG" id="COG0078">
    <property type="taxonomic scope" value="Bacteria"/>
</dbReference>
<dbReference type="HOGENOM" id="CLU_043846_3_2_11"/>
<dbReference type="UniPathway" id="UPA00068">
    <property type="reaction ID" value="UER00112"/>
</dbReference>
<dbReference type="Proteomes" id="UP000002007">
    <property type="component" value="Chromosome"/>
</dbReference>
<dbReference type="GO" id="GO:0005737">
    <property type="term" value="C:cytoplasm"/>
    <property type="evidence" value="ECO:0007669"/>
    <property type="project" value="UniProtKB-SubCell"/>
</dbReference>
<dbReference type="GO" id="GO:0016597">
    <property type="term" value="F:amino acid binding"/>
    <property type="evidence" value="ECO:0007669"/>
    <property type="project" value="InterPro"/>
</dbReference>
<dbReference type="GO" id="GO:0004585">
    <property type="term" value="F:ornithine carbamoyltransferase activity"/>
    <property type="evidence" value="ECO:0007669"/>
    <property type="project" value="UniProtKB-UniRule"/>
</dbReference>
<dbReference type="GO" id="GO:0042450">
    <property type="term" value="P:arginine biosynthetic process via ornithine"/>
    <property type="evidence" value="ECO:0007669"/>
    <property type="project" value="TreeGrafter"/>
</dbReference>
<dbReference type="GO" id="GO:0019240">
    <property type="term" value="P:citrulline biosynthetic process"/>
    <property type="evidence" value="ECO:0007669"/>
    <property type="project" value="TreeGrafter"/>
</dbReference>
<dbReference type="GO" id="GO:0006526">
    <property type="term" value="P:L-arginine biosynthetic process"/>
    <property type="evidence" value="ECO:0007669"/>
    <property type="project" value="UniProtKB-UniRule"/>
</dbReference>
<dbReference type="FunFam" id="3.40.50.1370:FF:000008">
    <property type="entry name" value="Ornithine carbamoyltransferase"/>
    <property type="match status" value="1"/>
</dbReference>
<dbReference type="Gene3D" id="3.40.50.1370">
    <property type="entry name" value="Aspartate/ornithine carbamoyltransferase"/>
    <property type="match status" value="2"/>
</dbReference>
<dbReference type="HAMAP" id="MF_01109">
    <property type="entry name" value="OTCase"/>
    <property type="match status" value="1"/>
</dbReference>
<dbReference type="InterPro" id="IPR006132">
    <property type="entry name" value="Asp/Orn_carbamoyltranf_P-bd"/>
</dbReference>
<dbReference type="InterPro" id="IPR006130">
    <property type="entry name" value="Asp/Orn_carbamoylTrfase"/>
</dbReference>
<dbReference type="InterPro" id="IPR036901">
    <property type="entry name" value="Asp/Orn_carbamoylTrfase_sf"/>
</dbReference>
<dbReference type="InterPro" id="IPR006131">
    <property type="entry name" value="Asp_carbamoyltransf_Asp/Orn-bd"/>
</dbReference>
<dbReference type="InterPro" id="IPR002292">
    <property type="entry name" value="Orn/put_carbamltrans"/>
</dbReference>
<dbReference type="InterPro" id="IPR024904">
    <property type="entry name" value="OTCase_ArgI"/>
</dbReference>
<dbReference type="NCBIfam" id="TIGR00658">
    <property type="entry name" value="orni_carb_tr"/>
    <property type="match status" value="1"/>
</dbReference>
<dbReference type="NCBIfam" id="NF001986">
    <property type="entry name" value="PRK00779.1"/>
    <property type="match status" value="1"/>
</dbReference>
<dbReference type="PANTHER" id="PTHR45753">
    <property type="entry name" value="ORNITHINE CARBAMOYLTRANSFERASE, MITOCHONDRIAL"/>
    <property type="match status" value="1"/>
</dbReference>
<dbReference type="PANTHER" id="PTHR45753:SF3">
    <property type="entry name" value="ORNITHINE TRANSCARBAMYLASE, MITOCHONDRIAL"/>
    <property type="match status" value="1"/>
</dbReference>
<dbReference type="Pfam" id="PF00185">
    <property type="entry name" value="OTCace"/>
    <property type="match status" value="1"/>
</dbReference>
<dbReference type="Pfam" id="PF02729">
    <property type="entry name" value="OTCace_N"/>
    <property type="match status" value="1"/>
</dbReference>
<dbReference type="PRINTS" id="PR00100">
    <property type="entry name" value="AOTCASE"/>
</dbReference>
<dbReference type="PRINTS" id="PR00102">
    <property type="entry name" value="OTCASE"/>
</dbReference>
<dbReference type="SUPFAM" id="SSF53671">
    <property type="entry name" value="Aspartate/ornithine carbamoyltransferase"/>
    <property type="match status" value="1"/>
</dbReference>
<dbReference type="PROSITE" id="PS00097">
    <property type="entry name" value="CARBAMOYLTRANSFERASE"/>
    <property type="match status" value="1"/>
</dbReference>
<feature type="chain" id="PRO_1000084861" description="Ornithine carbamoyltransferase">
    <location>
        <begin position="1"/>
        <end position="311"/>
    </location>
</feature>
<feature type="binding site" evidence="2">
    <location>
        <begin position="54"/>
        <end position="57"/>
    </location>
    <ligand>
        <name>carbamoyl phosphate</name>
        <dbReference type="ChEBI" id="CHEBI:58228"/>
    </ligand>
</feature>
<feature type="binding site" evidence="2">
    <location>
        <position position="81"/>
    </location>
    <ligand>
        <name>carbamoyl phosphate</name>
        <dbReference type="ChEBI" id="CHEBI:58228"/>
    </ligand>
</feature>
<feature type="binding site" evidence="2">
    <location>
        <position position="105"/>
    </location>
    <ligand>
        <name>carbamoyl phosphate</name>
        <dbReference type="ChEBI" id="CHEBI:58228"/>
    </ligand>
</feature>
<feature type="binding site" evidence="2">
    <location>
        <begin position="132"/>
        <end position="135"/>
    </location>
    <ligand>
        <name>carbamoyl phosphate</name>
        <dbReference type="ChEBI" id="CHEBI:58228"/>
    </ligand>
</feature>
<feature type="binding site" evidence="2">
    <location>
        <position position="164"/>
    </location>
    <ligand>
        <name>L-ornithine</name>
        <dbReference type="ChEBI" id="CHEBI:46911"/>
    </ligand>
</feature>
<feature type="binding site" evidence="2">
    <location>
        <position position="228"/>
    </location>
    <ligand>
        <name>L-ornithine</name>
        <dbReference type="ChEBI" id="CHEBI:46911"/>
    </ligand>
</feature>
<feature type="binding site" evidence="2">
    <location>
        <begin position="232"/>
        <end position="233"/>
    </location>
    <ligand>
        <name>L-ornithine</name>
        <dbReference type="ChEBI" id="CHEBI:46911"/>
    </ligand>
</feature>
<feature type="binding site" evidence="2">
    <location>
        <begin position="268"/>
        <end position="269"/>
    </location>
    <ligand>
        <name>carbamoyl phosphate</name>
        <dbReference type="ChEBI" id="CHEBI:58228"/>
    </ligand>
</feature>
<feature type="binding site" evidence="2">
    <location>
        <position position="296"/>
    </location>
    <ligand>
        <name>carbamoyl phosphate</name>
        <dbReference type="ChEBI" id="CHEBI:58228"/>
    </ligand>
</feature>
<name>OTC_RENSM</name>
<accession>A9WQ88</accession>
<protein>
    <recommendedName>
        <fullName evidence="2">Ornithine carbamoyltransferase</fullName>
        <shortName evidence="2">OTCase</shortName>
        <ecNumber evidence="2">2.1.3.3</ecNumber>
    </recommendedName>
</protein>
<reference key="1">
    <citation type="journal article" date="2008" name="J. Bacteriol.">
        <title>Genome sequence of the fish pathogen Renibacterium salmoninarum suggests reductive evolution away from an environmental Arthrobacter ancestor.</title>
        <authorList>
            <person name="Wiens G.D."/>
            <person name="Rockey D.D."/>
            <person name="Wu Z."/>
            <person name="Chang J."/>
            <person name="Levy R."/>
            <person name="Crane S."/>
            <person name="Chen D.S."/>
            <person name="Capri G.R."/>
            <person name="Burnett J.R."/>
            <person name="Sudheesh P.S."/>
            <person name="Schipma M.J."/>
            <person name="Burd H."/>
            <person name="Bhattacharyya A."/>
            <person name="Rhodes L.D."/>
            <person name="Kaul R."/>
            <person name="Strom M.S."/>
        </authorList>
    </citation>
    <scope>NUCLEOTIDE SEQUENCE [LARGE SCALE GENOMIC DNA]</scope>
    <source>
        <strain>ATCC 33209 / DSM 20767 / JCM 11484 / NBRC 15589 / NCIMB 2235</strain>
    </source>
</reference>
<keyword id="KW-0028">Amino-acid biosynthesis</keyword>
<keyword id="KW-0055">Arginine biosynthesis</keyword>
<keyword id="KW-0963">Cytoplasm</keyword>
<keyword id="KW-1185">Reference proteome</keyword>
<keyword id="KW-0808">Transferase</keyword>
<proteinExistence type="inferred from homology"/>
<evidence type="ECO:0000250" key="1"/>
<evidence type="ECO:0000255" key="2">
    <source>
        <dbReference type="HAMAP-Rule" id="MF_01109"/>
    </source>
</evidence>
<organism>
    <name type="scientific">Renibacterium salmoninarum (strain ATCC 33209 / DSM 20767 / JCM 11484 / NBRC 15589 / NCIMB 2235)</name>
    <dbReference type="NCBI Taxonomy" id="288705"/>
    <lineage>
        <taxon>Bacteria</taxon>
        <taxon>Bacillati</taxon>
        <taxon>Actinomycetota</taxon>
        <taxon>Actinomycetes</taxon>
        <taxon>Micrococcales</taxon>
        <taxon>Micrococcaceae</taxon>
        <taxon>Renibacterium</taxon>
    </lineage>
</organism>